<organism evidence="2">
    <name type="scientific">Megoura viciae</name>
    <name type="common">Vetch aphid</name>
    <dbReference type="NCBI Taxonomy" id="112273"/>
    <lineage>
        <taxon>Eukaryota</taxon>
        <taxon>Metazoa</taxon>
        <taxon>Ecdysozoa</taxon>
        <taxon>Arthropoda</taxon>
        <taxon>Hexapoda</taxon>
        <taxon>Insecta</taxon>
        <taxon>Pterygota</taxon>
        <taxon>Neoptera</taxon>
        <taxon>Paraneoptera</taxon>
        <taxon>Hemiptera</taxon>
        <taxon>Sternorrhyncha</taxon>
        <taxon>Aphidomorpha</taxon>
        <taxon>Aphidoidea</taxon>
        <taxon>Aphididae</taxon>
        <taxon>Macrosiphini</taxon>
        <taxon>Megoura</taxon>
    </lineage>
</organism>
<comment type="function">
    <text evidence="1 2">Has antimicrobial activity against Gram-positive bacteria and fungi.</text>
</comment>
<comment type="subunit">
    <text evidence="1 2">Monomer.</text>
</comment>
<comment type="subcellular location">
    <subcellularLocation>
        <location evidence="2">Secreted</location>
    </subcellularLocation>
</comment>
<comment type="induction">
    <text evidence="1 2">By bacterial infection.</text>
</comment>
<comment type="PTM">
    <text>Contains four disulfide bonds.</text>
</comment>
<comment type="mass spectrometry"/>
<feature type="chain" id="PRO_0000096576" description="Megourin-1">
    <location>
        <begin position="1"/>
        <end position="63"/>
    </location>
</feature>
<reference evidence="2" key="1">
    <citation type="submission" date="2002-07" db="UniProtKB">
        <authorList>
            <person name="Bulet P."/>
            <person name="Charlet M."/>
            <person name="Chernish S."/>
            <person name="Hetru C."/>
        </authorList>
    </citation>
    <scope>PROTEIN SEQUENCE</scope>
    <scope>FUNCTION</scope>
    <scope>SUBUNIT</scope>
    <scope>INDUCTION</scope>
    <scope>MASS SPECTROMETRY</scope>
</reference>
<name>MRN1_MEGVI</name>
<dbReference type="GO" id="GO:0005576">
    <property type="term" value="C:extracellular region"/>
    <property type="evidence" value="ECO:0007669"/>
    <property type="project" value="UniProtKB-SubCell"/>
</dbReference>
<dbReference type="GO" id="GO:0042742">
    <property type="term" value="P:defense response to bacterium"/>
    <property type="evidence" value="ECO:0007669"/>
    <property type="project" value="UniProtKB-KW"/>
</dbReference>
<dbReference type="GO" id="GO:0050832">
    <property type="term" value="P:defense response to fungus"/>
    <property type="evidence" value="ECO:0007669"/>
    <property type="project" value="UniProtKB-KW"/>
</dbReference>
<dbReference type="GO" id="GO:0045087">
    <property type="term" value="P:innate immune response"/>
    <property type="evidence" value="ECO:0007669"/>
    <property type="project" value="UniProtKB-KW"/>
</dbReference>
<dbReference type="GO" id="GO:0031640">
    <property type="term" value="P:killing of cells of another organism"/>
    <property type="evidence" value="ECO:0007669"/>
    <property type="project" value="UniProtKB-KW"/>
</dbReference>
<dbReference type="InterPro" id="IPR035171">
    <property type="entry name" value="Megourin"/>
</dbReference>
<dbReference type="Pfam" id="PF17560">
    <property type="entry name" value="Megourin"/>
    <property type="match status" value="1"/>
</dbReference>
<keyword id="KW-0044">Antibiotic</keyword>
<keyword id="KW-0929">Antimicrobial</keyword>
<keyword id="KW-0903">Direct protein sequencing</keyword>
<keyword id="KW-1015">Disulfide bond</keyword>
<keyword id="KW-0295">Fungicide</keyword>
<keyword id="KW-0391">Immunity</keyword>
<keyword id="KW-0399">Innate immunity</keyword>
<keyword id="KW-0964">Secreted</keyword>
<accession>P83417</accession>
<protein>
    <recommendedName>
        <fullName>Megourin-1</fullName>
    </recommendedName>
</protein>
<evidence type="ECO:0000269" key="1">
    <source ref="1"/>
</evidence>
<evidence type="ECO:0000305" key="2"/>
<proteinExistence type="evidence at protein level"/>
<sequence>YLDVKQLANYLLCIGNGQVFNGRKTCQIGCRAVCQQPGCSGYKECEQIPNIRLHKYRCHCNEA</sequence>